<comment type="function">
    <text evidence="1">Catalyzes the isomerization between 2-isopropylmalate and 3-isopropylmalate, via the formation of 2-isopropylmaleate.</text>
</comment>
<comment type="catalytic activity">
    <reaction evidence="1">
        <text>(2R,3S)-3-isopropylmalate = (2S)-2-isopropylmalate</text>
        <dbReference type="Rhea" id="RHEA:32287"/>
        <dbReference type="ChEBI" id="CHEBI:1178"/>
        <dbReference type="ChEBI" id="CHEBI:35121"/>
        <dbReference type="EC" id="4.2.1.33"/>
    </reaction>
</comment>
<comment type="cofactor">
    <cofactor evidence="1">
        <name>[4Fe-4S] cluster</name>
        <dbReference type="ChEBI" id="CHEBI:49883"/>
    </cofactor>
    <text evidence="1">Binds 1 [4Fe-4S] cluster per subunit.</text>
</comment>
<comment type="pathway">
    <text evidence="1">Amino-acid biosynthesis; L-leucine biosynthesis; L-leucine from 3-methyl-2-oxobutanoate: step 2/4.</text>
</comment>
<comment type="subunit">
    <text evidence="1">Heterodimer of LeuC and LeuD.</text>
</comment>
<comment type="similarity">
    <text evidence="1">Belongs to the aconitase/IPM isomerase family. LeuC type 1 subfamily.</text>
</comment>
<dbReference type="EC" id="4.2.1.33" evidence="1"/>
<dbReference type="EMBL" id="CP000425">
    <property type="protein sequence ID" value="ABJ72841.1"/>
    <property type="molecule type" value="Genomic_DNA"/>
</dbReference>
<dbReference type="RefSeq" id="WP_011676136.1">
    <property type="nucleotide sequence ID" value="NC_008527.1"/>
</dbReference>
<dbReference type="SMR" id="Q02YY1"/>
<dbReference type="KEGG" id="llc:LACR_1317"/>
<dbReference type="HOGENOM" id="CLU_006714_3_4_9"/>
<dbReference type="UniPathway" id="UPA00048">
    <property type="reaction ID" value="UER00071"/>
</dbReference>
<dbReference type="Proteomes" id="UP000000240">
    <property type="component" value="Chromosome"/>
</dbReference>
<dbReference type="GO" id="GO:0003861">
    <property type="term" value="F:3-isopropylmalate dehydratase activity"/>
    <property type="evidence" value="ECO:0007669"/>
    <property type="project" value="UniProtKB-UniRule"/>
</dbReference>
<dbReference type="GO" id="GO:0051539">
    <property type="term" value="F:4 iron, 4 sulfur cluster binding"/>
    <property type="evidence" value="ECO:0007669"/>
    <property type="project" value="UniProtKB-KW"/>
</dbReference>
<dbReference type="GO" id="GO:0046872">
    <property type="term" value="F:metal ion binding"/>
    <property type="evidence" value="ECO:0007669"/>
    <property type="project" value="UniProtKB-KW"/>
</dbReference>
<dbReference type="GO" id="GO:0009098">
    <property type="term" value="P:L-leucine biosynthetic process"/>
    <property type="evidence" value="ECO:0007669"/>
    <property type="project" value="UniProtKB-UniRule"/>
</dbReference>
<dbReference type="CDD" id="cd01583">
    <property type="entry name" value="IPMI"/>
    <property type="match status" value="1"/>
</dbReference>
<dbReference type="Gene3D" id="3.30.499.10">
    <property type="entry name" value="Aconitase, domain 3"/>
    <property type="match status" value="2"/>
</dbReference>
<dbReference type="HAMAP" id="MF_01026">
    <property type="entry name" value="LeuC_type1"/>
    <property type="match status" value="1"/>
</dbReference>
<dbReference type="InterPro" id="IPR004430">
    <property type="entry name" value="3-IsopropMal_deHydase_lsu"/>
</dbReference>
<dbReference type="InterPro" id="IPR015931">
    <property type="entry name" value="Acnase/IPM_dHydase_lsu_aba_1/3"/>
</dbReference>
<dbReference type="InterPro" id="IPR001030">
    <property type="entry name" value="Acoase/IPM_deHydtase_lsu_aba"/>
</dbReference>
<dbReference type="InterPro" id="IPR018136">
    <property type="entry name" value="Aconitase_4Fe-4S_BS"/>
</dbReference>
<dbReference type="InterPro" id="IPR036008">
    <property type="entry name" value="Aconitase_4Fe-4S_dom"/>
</dbReference>
<dbReference type="InterPro" id="IPR050067">
    <property type="entry name" value="IPM_dehydratase_rel_enz"/>
</dbReference>
<dbReference type="InterPro" id="IPR033941">
    <property type="entry name" value="IPMI_cat"/>
</dbReference>
<dbReference type="NCBIfam" id="TIGR00170">
    <property type="entry name" value="leuC"/>
    <property type="match status" value="1"/>
</dbReference>
<dbReference type="NCBIfam" id="NF004016">
    <property type="entry name" value="PRK05478.1"/>
    <property type="match status" value="1"/>
</dbReference>
<dbReference type="NCBIfam" id="NF009116">
    <property type="entry name" value="PRK12466.1"/>
    <property type="match status" value="1"/>
</dbReference>
<dbReference type="PANTHER" id="PTHR43822:SF9">
    <property type="entry name" value="3-ISOPROPYLMALATE DEHYDRATASE"/>
    <property type="match status" value="1"/>
</dbReference>
<dbReference type="PANTHER" id="PTHR43822">
    <property type="entry name" value="HOMOACONITASE, MITOCHONDRIAL-RELATED"/>
    <property type="match status" value="1"/>
</dbReference>
<dbReference type="Pfam" id="PF00330">
    <property type="entry name" value="Aconitase"/>
    <property type="match status" value="1"/>
</dbReference>
<dbReference type="PRINTS" id="PR00415">
    <property type="entry name" value="ACONITASE"/>
</dbReference>
<dbReference type="SUPFAM" id="SSF53732">
    <property type="entry name" value="Aconitase iron-sulfur domain"/>
    <property type="match status" value="1"/>
</dbReference>
<dbReference type="PROSITE" id="PS00450">
    <property type="entry name" value="ACONITASE_1"/>
    <property type="match status" value="1"/>
</dbReference>
<proteinExistence type="inferred from homology"/>
<organism>
    <name type="scientific">Lactococcus lactis subsp. cremoris (strain SK11)</name>
    <dbReference type="NCBI Taxonomy" id="272622"/>
    <lineage>
        <taxon>Bacteria</taxon>
        <taxon>Bacillati</taxon>
        <taxon>Bacillota</taxon>
        <taxon>Bacilli</taxon>
        <taxon>Lactobacillales</taxon>
        <taxon>Streptococcaceae</taxon>
        <taxon>Lactococcus</taxon>
        <taxon>Lactococcus cremoris subsp. cremoris</taxon>
    </lineage>
</organism>
<protein>
    <recommendedName>
        <fullName evidence="1">3-isopropylmalate dehydratase large subunit</fullName>
        <ecNumber evidence="1">4.2.1.33</ecNumber>
    </recommendedName>
    <alternativeName>
        <fullName evidence="1">Alpha-IPM isomerase</fullName>
        <shortName evidence="1">IPMI</shortName>
    </alternativeName>
    <alternativeName>
        <fullName evidence="1">Isopropylmalate isomerase</fullName>
    </alternativeName>
</protein>
<sequence>MTAKTIFDKLWDRHVVAGNEGEPQLLYIDLHVIHEVTSPQAFQGLRDAGRSVRRRDLTYGTLDHNVPTKDIFNIQDLISKKQIDTFTKNVKEFGIPAEAHGGKGQGIVHMVAPESGRTQPGKTIVCGDSHTATNGAFGAIAFGIGTSEVEHVLATQTIWQVKPKRMKIEFQGHPQKGVYSKDFILALIAKYGVDAGVGYAVEYTGNAISDLSMEERMTICNMSIEFGAKMGQMNPDEKTYDYVKGREYAPENFDEAVSKWEKLVSDSDAVYDKVLTLDVSQLKPMVTWGTNPGMGLEFGEEFPKINDDLNYERAYQYMDLKPGQTASDIDLGYIFIGSCTNARLGDLEEAAKIIKGNHIADGLTGIVVPGSRPVKIADEELGLDKIFKNAGFEWREPVCSACLGMNPDQIPAYVHCASTSNRNFEGRQGHNARTHLCSPAMAAAAAIAGKFVDVREIV</sequence>
<name>LEUC_LACLS</name>
<evidence type="ECO:0000255" key="1">
    <source>
        <dbReference type="HAMAP-Rule" id="MF_01026"/>
    </source>
</evidence>
<accession>Q02YY1</accession>
<keyword id="KW-0004">4Fe-4S</keyword>
<keyword id="KW-0028">Amino-acid biosynthesis</keyword>
<keyword id="KW-0100">Branched-chain amino acid biosynthesis</keyword>
<keyword id="KW-0408">Iron</keyword>
<keyword id="KW-0411">Iron-sulfur</keyword>
<keyword id="KW-0432">Leucine biosynthesis</keyword>
<keyword id="KW-0456">Lyase</keyword>
<keyword id="KW-0479">Metal-binding</keyword>
<feature type="chain" id="PRO_1000063566" description="3-isopropylmalate dehydratase large subunit">
    <location>
        <begin position="1"/>
        <end position="458"/>
    </location>
</feature>
<feature type="binding site" evidence="1">
    <location>
        <position position="339"/>
    </location>
    <ligand>
        <name>[4Fe-4S] cluster</name>
        <dbReference type="ChEBI" id="CHEBI:49883"/>
    </ligand>
</feature>
<feature type="binding site" evidence="1">
    <location>
        <position position="399"/>
    </location>
    <ligand>
        <name>[4Fe-4S] cluster</name>
        <dbReference type="ChEBI" id="CHEBI:49883"/>
    </ligand>
</feature>
<feature type="binding site" evidence="1">
    <location>
        <position position="402"/>
    </location>
    <ligand>
        <name>[4Fe-4S] cluster</name>
        <dbReference type="ChEBI" id="CHEBI:49883"/>
    </ligand>
</feature>
<reference key="1">
    <citation type="journal article" date="2006" name="Proc. Natl. Acad. Sci. U.S.A.">
        <title>Comparative genomics of the lactic acid bacteria.</title>
        <authorList>
            <person name="Makarova K.S."/>
            <person name="Slesarev A."/>
            <person name="Wolf Y.I."/>
            <person name="Sorokin A."/>
            <person name="Mirkin B."/>
            <person name="Koonin E.V."/>
            <person name="Pavlov A."/>
            <person name="Pavlova N."/>
            <person name="Karamychev V."/>
            <person name="Polouchine N."/>
            <person name="Shakhova V."/>
            <person name="Grigoriev I."/>
            <person name="Lou Y."/>
            <person name="Rohksar D."/>
            <person name="Lucas S."/>
            <person name="Huang K."/>
            <person name="Goodstein D.M."/>
            <person name="Hawkins T."/>
            <person name="Plengvidhya V."/>
            <person name="Welker D."/>
            <person name="Hughes J."/>
            <person name="Goh Y."/>
            <person name="Benson A."/>
            <person name="Baldwin K."/>
            <person name="Lee J.-H."/>
            <person name="Diaz-Muniz I."/>
            <person name="Dosti B."/>
            <person name="Smeianov V."/>
            <person name="Wechter W."/>
            <person name="Barabote R."/>
            <person name="Lorca G."/>
            <person name="Altermann E."/>
            <person name="Barrangou R."/>
            <person name="Ganesan B."/>
            <person name="Xie Y."/>
            <person name="Rawsthorne H."/>
            <person name="Tamir D."/>
            <person name="Parker C."/>
            <person name="Breidt F."/>
            <person name="Broadbent J.R."/>
            <person name="Hutkins R."/>
            <person name="O'Sullivan D."/>
            <person name="Steele J."/>
            <person name="Unlu G."/>
            <person name="Saier M.H. Jr."/>
            <person name="Klaenhammer T."/>
            <person name="Richardson P."/>
            <person name="Kozyavkin S."/>
            <person name="Weimer B.C."/>
            <person name="Mills D.A."/>
        </authorList>
    </citation>
    <scope>NUCLEOTIDE SEQUENCE [LARGE SCALE GENOMIC DNA]</scope>
    <source>
        <strain>SK11</strain>
    </source>
</reference>
<gene>
    <name evidence="1" type="primary">leuC</name>
    <name type="ordered locus">LACR_1317</name>
</gene>